<keyword id="KW-0539">Nucleus</keyword>
<keyword id="KW-1185">Reference proteome</keyword>
<keyword id="KW-0690">Ribosome biogenesis</keyword>
<proteinExistence type="inferred from homology"/>
<protein>
    <recommendedName>
        <fullName>Probable ribosome biogenesis protein RLP24</fullName>
    </recommendedName>
</protein>
<name>RLP24_CAEEL</name>
<organism>
    <name type="scientific">Caenorhabditis elegans</name>
    <dbReference type="NCBI Taxonomy" id="6239"/>
    <lineage>
        <taxon>Eukaryota</taxon>
        <taxon>Metazoa</taxon>
        <taxon>Ecdysozoa</taxon>
        <taxon>Nematoda</taxon>
        <taxon>Chromadorea</taxon>
        <taxon>Rhabditida</taxon>
        <taxon>Rhabditina</taxon>
        <taxon>Rhabditomorpha</taxon>
        <taxon>Rhabditoidea</taxon>
        <taxon>Rhabditidae</taxon>
        <taxon>Peloderinae</taxon>
        <taxon>Caenorhabditis</taxon>
    </lineage>
</organism>
<accession>Q17606</accession>
<feature type="chain" id="PRO_0000136900" description="Probable ribosome biogenesis protein RLP24">
    <location>
        <begin position="1"/>
        <end position="162"/>
    </location>
</feature>
<gene>
    <name evidence="3" type="primary">rsl-24D1</name>
    <name evidence="3" type="ORF">C03D6.8</name>
</gene>
<dbReference type="EMBL" id="Z75525">
    <property type="protein sequence ID" value="CAA99764.1"/>
    <property type="molecule type" value="Genomic_DNA"/>
</dbReference>
<dbReference type="PIR" id="T18884">
    <property type="entry name" value="T18884"/>
</dbReference>
<dbReference type="SMR" id="Q17606"/>
<dbReference type="BioGRID" id="38239">
    <property type="interactions" value="73"/>
</dbReference>
<dbReference type="FunCoup" id="Q17606">
    <property type="interactions" value="2731"/>
</dbReference>
<dbReference type="IntAct" id="Q17606">
    <property type="interactions" value="1"/>
</dbReference>
<dbReference type="STRING" id="6239.C03D6.8.1"/>
<dbReference type="PaxDb" id="6239-C03D6.8"/>
<dbReference type="PeptideAtlas" id="Q17606"/>
<dbReference type="EnsemblMetazoa" id="C03D6.8.1">
    <property type="protein sequence ID" value="C03D6.8.1"/>
    <property type="gene ID" value="WBGene00004437"/>
</dbReference>
<dbReference type="KEGG" id="cel:CELE_C03D6.8"/>
<dbReference type="UCSC" id="C03D6.8.1">
    <property type="organism name" value="c. elegans"/>
</dbReference>
<dbReference type="AGR" id="WB:WBGene00004437"/>
<dbReference type="CTD" id="172815"/>
<dbReference type="WormBase" id="C03D6.8">
    <property type="protein sequence ID" value="CE05202"/>
    <property type="gene ID" value="WBGene00004437"/>
    <property type="gene designation" value="rsl-24D1"/>
</dbReference>
<dbReference type="eggNOG" id="KOG1723">
    <property type="taxonomic scope" value="Eukaryota"/>
</dbReference>
<dbReference type="GeneTree" id="ENSGT00950000183105"/>
<dbReference type="HOGENOM" id="CLU_089419_2_2_1"/>
<dbReference type="InParanoid" id="Q17606"/>
<dbReference type="OMA" id="TCYFCSG"/>
<dbReference type="OrthoDB" id="10262490at2759"/>
<dbReference type="PhylomeDB" id="Q17606"/>
<dbReference type="PRO" id="PR:Q17606"/>
<dbReference type="Proteomes" id="UP000001940">
    <property type="component" value="Chromosome I"/>
</dbReference>
<dbReference type="Bgee" id="WBGene00004437">
    <property type="expression patterns" value="Expressed in pharyngeal muscle cell (C elegans) and 4 other cell types or tissues"/>
</dbReference>
<dbReference type="GO" id="GO:0005730">
    <property type="term" value="C:nucleolus"/>
    <property type="evidence" value="ECO:0000318"/>
    <property type="project" value="GO_Central"/>
</dbReference>
<dbReference type="GO" id="GO:0003735">
    <property type="term" value="F:structural constituent of ribosome"/>
    <property type="evidence" value="ECO:0007669"/>
    <property type="project" value="InterPro"/>
</dbReference>
<dbReference type="GO" id="GO:0042273">
    <property type="term" value="P:ribosomal large subunit biogenesis"/>
    <property type="evidence" value="ECO:0000318"/>
    <property type="project" value="GO_Central"/>
</dbReference>
<dbReference type="CDD" id="cd00472">
    <property type="entry name" value="Ribosomal_L24e_L24"/>
    <property type="match status" value="1"/>
</dbReference>
<dbReference type="FunFam" id="2.30.170.20:FF:000001">
    <property type="entry name" value="probable ribosome biogenesis protein RLP24"/>
    <property type="match status" value="1"/>
</dbReference>
<dbReference type="Gene3D" id="2.30.170.20">
    <property type="entry name" value="Ribosomal protein L24e"/>
    <property type="match status" value="1"/>
</dbReference>
<dbReference type="InterPro" id="IPR038630">
    <property type="entry name" value="L24e/L24_sf"/>
</dbReference>
<dbReference type="InterPro" id="IPR056366">
    <property type="entry name" value="Ribosomal_eL24"/>
</dbReference>
<dbReference type="InterPro" id="IPR000988">
    <property type="entry name" value="Ribosomal_eL24-rel_N"/>
</dbReference>
<dbReference type="InterPro" id="IPR023442">
    <property type="entry name" value="Ribosomal_eL24_CS"/>
</dbReference>
<dbReference type="InterPro" id="IPR011017">
    <property type="entry name" value="TRASH_dom"/>
</dbReference>
<dbReference type="PANTHER" id="PTHR10792">
    <property type="entry name" value="60S RIBOSOMAL PROTEIN L24"/>
    <property type="match status" value="1"/>
</dbReference>
<dbReference type="PANTHER" id="PTHR10792:SF8">
    <property type="entry name" value="RIBOSOME BIOGENESIS PROTEIN RLP24-RELATED"/>
    <property type="match status" value="1"/>
</dbReference>
<dbReference type="Pfam" id="PF01246">
    <property type="entry name" value="Ribosomal_L24e"/>
    <property type="match status" value="1"/>
</dbReference>
<dbReference type="SMART" id="SM00746">
    <property type="entry name" value="TRASH"/>
    <property type="match status" value="1"/>
</dbReference>
<dbReference type="SUPFAM" id="SSF57716">
    <property type="entry name" value="Glucocorticoid receptor-like (DNA-binding domain)"/>
    <property type="match status" value="1"/>
</dbReference>
<dbReference type="PROSITE" id="PS01073">
    <property type="entry name" value="RIBOSOMAL_L24E"/>
    <property type="match status" value="1"/>
</dbReference>
<sequence length="162" mass="18799">MRIEKCYFCSSPIYPGHGIQFVRNDSTVFKFCRSRCNKLFKKKKNPRKLRFTKAARRARGKELINDATQLLEQRRDEPVKYERAMFQKTIEAAKTISALKTKRYGNLIRKRLQPGKIVQKKGLLAKVDKKMHLIRAPVANRDGVKTRAAAKEKKTAESMETN</sequence>
<comment type="function">
    <text evidence="1">Involved in the biogenesis of the 60S ribosomal subunit. Ensures the docking of NOG1 to pre-60S particles (By similarity).</text>
</comment>
<comment type="subunit">
    <text evidence="1">Associated with nucleolar and cytoplasmic pre-60S particles. At the end of biogenesis it dissociates from cytoplasmic pre-60S particles and is likely to be exchanged for its ribosomal homologue, RPL24 (By similarity).</text>
</comment>
<comment type="subcellular location">
    <subcellularLocation>
        <location evidence="1">Nucleus</location>
        <location evidence="1">Nucleolus</location>
    </subcellularLocation>
</comment>
<comment type="similarity">
    <text evidence="2">Belongs to the eukaryotic ribosomal protein eL24 family.</text>
</comment>
<reference key="1">
    <citation type="journal article" date="1998" name="Science">
        <title>Genome sequence of the nematode C. elegans: a platform for investigating biology.</title>
        <authorList>
            <consortium name="The C. elegans sequencing consortium"/>
        </authorList>
    </citation>
    <scope>NUCLEOTIDE SEQUENCE [LARGE SCALE GENOMIC DNA]</scope>
    <source>
        <strain>Bristol N2</strain>
    </source>
</reference>
<evidence type="ECO:0000250" key="1"/>
<evidence type="ECO:0000305" key="2"/>
<evidence type="ECO:0000312" key="3">
    <source>
        <dbReference type="WormBase" id="C03D6.8"/>
    </source>
</evidence>